<accession>Q1GMM6</accession>
<evidence type="ECO:0000255" key="1">
    <source>
        <dbReference type="HAMAP-Rule" id="MF_01690"/>
    </source>
</evidence>
<reference key="1">
    <citation type="submission" date="2006-05" db="EMBL/GenBank/DDBJ databases">
        <title>Complete sequence of megaplasmid of Silicibacter sp. TM1040.</title>
        <authorList>
            <consortium name="US DOE Joint Genome Institute"/>
            <person name="Copeland A."/>
            <person name="Lucas S."/>
            <person name="Lapidus A."/>
            <person name="Barry K."/>
            <person name="Detter J.C."/>
            <person name="Glavina del Rio T."/>
            <person name="Hammon N."/>
            <person name="Israni S."/>
            <person name="Dalin E."/>
            <person name="Tice H."/>
            <person name="Pitluck S."/>
            <person name="Brettin T."/>
            <person name="Bruce D."/>
            <person name="Han C."/>
            <person name="Tapia R."/>
            <person name="Goodwin L."/>
            <person name="Thompson L.S."/>
            <person name="Gilna P."/>
            <person name="Schmutz J."/>
            <person name="Larimer F."/>
            <person name="Land M."/>
            <person name="Hauser L."/>
            <person name="Kyrpides N."/>
            <person name="Kim E."/>
            <person name="Belas R."/>
            <person name="Moran M.A."/>
            <person name="Buchan A."/>
            <person name="Gonzalez J.M."/>
            <person name="Schell M.A."/>
            <person name="Sun F."/>
            <person name="Richardson P."/>
        </authorList>
    </citation>
    <scope>NUCLEOTIDE SEQUENCE [LARGE SCALE GENOMIC DNA]</scope>
    <source>
        <strain>TM1040</strain>
    </source>
</reference>
<sequence length="395" mass="42526">MNKLSAPRAQHAVDPVELTADLVRCQTVTPEEGSALKLLSALLSEHGFQCQRIDRNGIPNLFAIWGEDRNGRTFGFNGHTDVVPIGDPKDWTVDPFGAEIRDGILYGRGSTDMKSGVAAFAAAAIEFVNETPPDGRVIIAITGAEETGSPDGTRAIVQWMEANDIRADHFIVGEPTSLKSIGDAIKIGRRGTITVFLTVTGVQGHSGYPEKANNPLPALVDLLQGFGQAAMDEGTEFFAPSTLAITTIDTGNPARNVIPATCKATLSIRFNDKWTSGKVLDWVSRHTRAAEDKFGVTISADHYLSGECFFTPPGALSKLVQDAVEQETGQRPQMTTLGGSSDARHLFKHCPVVEVGLTGETLHQVDEHVSVAEINALKTVYGRILRDYFGSEGKI</sequence>
<comment type="function">
    <text evidence="1">Catalyzes the hydrolysis of N-succinyl-L,L-diaminopimelic acid (SDAP), forming succinate and LL-2,6-diaminopimelate (DAP), an intermediate involved in the bacterial biosynthesis of lysine and meso-diaminopimelic acid, an essential component of bacterial cell walls.</text>
</comment>
<comment type="catalytic activity">
    <reaction evidence="1">
        <text>N-succinyl-(2S,6S)-2,6-diaminopimelate + H2O = (2S,6S)-2,6-diaminopimelate + succinate</text>
        <dbReference type="Rhea" id="RHEA:22608"/>
        <dbReference type="ChEBI" id="CHEBI:15377"/>
        <dbReference type="ChEBI" id="CHEBI:30031"/>
        <dbReference type="ChEBI" id="CHEBI:57609"/>
        <dbReference type="ChEBI" id="CHEBI:58087"/>
        <dbReference type="EC" id="3.5.1.18"/>
    </reaction>
</comment>
<comment type="cofactor">
    <cofactor evidence="1">
        <name>Zn(2+)</name>
        <dbReference type="ChEBI" id="CHEBI:29105"/>
    </cofactor>
    <cofactor evidence="1">
        <name>Co(2+)</name>
        <dbReference type="ChEBI" id="CHEBI:48828"/>
    </cofactor>
    <text evidence="1">Binds 2 Zn(2+) or Co(2+) ions per subunit.</text>
</comment>
<comment type="pathway">
    <text evidence="1">Amino-acid biosynthesis; L-lysine biosynthesis via DAP pathway; LL-2,6-diaminopimelate from (S)-tetrahydrodipicolinate (succinylase route): step 3/3.</text>
</comment>
<comment type="subunit">
    <text evidence="1">Homodimer.</text>
</comment>
<comment type="similarity">
    <text evidence="1">Belongs to the peptidase M20A family. DapE subfamily.</text>
</comment>
<feature type="chain" id="PRO_0000375752" description="Succinyl-diaminopimelate desuccinylase 2">
    <location>
        <begin position="1"/>
        <end position="395"/>
    </location>
</feature>
<feature type="active site" evidence="1">
    <location>
        <position position="81"/>
    </location>
</feature>
<feature type="active site" description="Proton acceptor" evidence="1">
    <location>
        <position position="145"/>
    </location>
</feature>
<feature type="binding site" evidence="1">
    <location>
        <position position="79"/>
    </location>
    <ligand>
        <name>Zn(2+)</name>
        <dbReference type="ChEBI" id="CHEBI:29105"/>
        <label>1</label>
    </ligand>
</feature>
<feature type="binding site" evidence="1">
    <location>
        <position position="112"/>
    </location>
    <ligand>
        <name>Zn(2+)</name>
        <dbReference type="ChEBI" id="CHEBI:29105"/>
        <label>1</label>
    </ligand>
</feature>
<feature type="binding site" evidence="1">
    <location>
        <position position="112"/>
    </location>
    <ligand>
        <name>Zn(2+)</name>
        <dbReference type="ChEBI" id="CHEBI:29105"/>
        <label>2</label>
    </ligand>
</feature>
<feature type="binding site" evidence="1">
    <location>
        <position position="146"/>
    </location>
    <ligand>
        <name>Zn(2+)</name>
        <dbReference type="ChEBI" id="CHEBI:29105"/>
        <label>2</label>
    </ligand>
</feature>
<feature type="binding site" evidence="1">
    <location>
        <position position="174"/>
    </location>
    <ligand>
        <name>Zn(2+)</name>
        <dbReference type="ChEBI" id="CHEBI:29105"/>
        <label>1</label>
    </ligand>
</feature>
<feature type="binding site" evidence="1">
    <location>
        <position position="363"/>
    </location>
    <ligand>
        <name>Zn(2+)</name>
        <dbReference type="ChEBI" id="CHEBI:29105"/>
        <label>2</label>
    </ligand>
</feature>
<proteinExistence type="inferred from homology"/>
<dbReference type="EC" id="3.5.1.18" evidence="1"/>
<dbReference type="EMBL" id="CP000376">
    <property type="protein sequence ID" value="ABF62090.1"/>
    <property type="molecule type" value="Genomic_DNA"/>
</dbReference>
<dbReference type="RefSeq" id="WP_011536736.1">
    <property type="nucleotide sequence ID" value="NC_008043.1"/>
</dbReference>
<dbReference type="SMR" id="Q1GMM6"/>
<dbReference type="KEGG" id="sit:TM1040_3116"/>
<dbReference type="HOGENOM" id="CLU_021802_4_0_5"/>
<dbReference type="OrthoDB" id="9809784at2"/>
<dbReference type="UniPathway" id="UPA00034">
    <property type="reaction ID" value="UER00021"/>
</dbReference>
<dbReference type="Proteomes" id="UP000000636">
    <property type="component" value="Plasmid megaplasmid TM1040"/>
</dbReference>
<dbReference type="GO" id="GO:0008777">
    <property type="term" value="F:acetylornithine deacetylase activity"/>
    <property type="evidence" value="ECO:0007669"/>
    <property type="project" value="TreeGrafter"/>
</dbReference>
<dbReference type="GO" id="GO:0050897">
    <property type="term" value="F:cobalt ion binding"/>
    <property type="evidence" value="ECO:0007669"/>
    <property type="project" value="UniProtKB-UniRule"/>
</dbReference>
<dbReference type="GO" id="GO:0009014">
    <property type="term" value="F:succinyl-diaminopimelate desuccinylase activity"/>
    <property type="evidence" value="ECO:0007669"/>
    <property type="project" value="UniProtKB-UniRule"/>
</dbReference>
<dbReference type="GO" id="GO:0008270">
    <property type="term" value="F:zinc ion binding"/>
    <property type="evidence" value="ECO:0007669"/>
    <property type="project" value="UniProtKB-UniRule"/>
</dbReference>
<dbReference type="GO" id="GO:0019877">
    <property type="term" value="P:diaminopimelate biosynthetic process"/>
    <property type="evidence" value="ECO:0007669"/>
    <property type="project" value="UniProtKB-UniRule"/>
</dbReference>
<dbReference type="GO" id="GO:0006526">
    <property type="term" value="P:L-arginine biosynthetic process"/>
    <property type="evidence" value="ECO:0007669"/>
    <property type="project" value="TreeGrafter"/>
</dbReference>
<dbReference type="GO" id="GO:0009089">
    <property type="term" value="P:lysine biosynthetic process via diaminopimelate"/>
    <property type="evidence" value="ECO:0007669"/>
    <property type="project" value="UniProtKB-UniRule"/>
</dbReference>
<dbReference type="Gene3D" id="3.40.630.10">
    <property type="entry name" value="Zn peptidases"/>
    <property type="match status" value="2"/>
</dbReference>
<dbReference type="HAMAP" id="MF_01690">
    <property type="entry name" value="DapE"/>
    <property type="match status" value="1"/>
</dbReference>
<dbReference type="InterPro" id="IPR036264">
    <property type="entry name" value="Bact_exopeptidase_dim_dom"/>
</dbReference>
<dbReference type="InterPro" id="IPR005941">
    <property type="entry name" value="DapE_proteobac"/>
</dbReference>
<dbReference type="InterPro" id="IPR002933">
    <property type="entry name" value="Peptidase_M20"/>
</dbReference>
<dbReference type="InterPro" id="IPR011650">
    <property type="entry name" value="Peptidase_M20_dimer"/>
</dbReference>
<dbReference type="InterPro" id="IPR050072">
    <property type="entry name" value="Peptidase_M20A"/>
</dbReference>
<dbReference type="NCBIfam" id="NF009557">
    <property type="entry name" value="PRK13009.1"/>
    <property type="match status" value="1"/>
</dbReference>
<dbReference type="PANTHER" id="PTHR43808">
    <property type="entry name" value="ACETYLORNITHINE DEACETYLASE"/>
    <property type="match status" value="1"/>
</dbReference>
<dbReference type="PANTHER" id="PTHR43808:SF31">
    <property type="entry name" value="N-ACETYL-L-CITRULLINE DEACETYLASE"/>
    <property type="match status" value="1"/>
</dbReference>
<dbReference type="Pfam" id="PF07687">
    <property type="entry name" value="M20_dimer"/>
    <property type="match status" value="1"/>
</dbReference>
<dbReference type="Pfam" id="PF01546">
    <property type="entry name" value="Peptidase_M20"/>
    <property type="match status" value="1"/>
</dbReference>
<dbReference type="SUPFAM" id="SSF55031">
    <property type="entry name" value="Bacterial exopeptidase dimerisation domain"/>
    <property type="match status" value="1"/>
</dbReference>
<dbReference type="SUPFAM" id="SSF53187">
    <property type="entry name" value="Zn-dependent exopeptidases"/>
    <property type="match status" value="1"/>
</dbReference>
<name>DAPE2_RUEST</name>
<geneLocation type="plasmid">
    <name>megaplasmid TM1040</name>
</geneLocation>
<gene>
    <name evidence="1" type="primary">dapE2</name>
    <name type="ordered locus">TM1040_3116</name>
</gene>
<keyword id="KW-0028">Amino-acid biosynthesis</keyword>
<keyword id="KW-0170">Cobalt</keyword>
<keyword id="KW-0220">Diaminopimelate biosynthesis</keyword>
<keyword id="KW-0378">Hydrolase</keyword>
<keyword id="KW-0457">Lysine biosynthesis</keyword>
<keyword id="KW-0479">Metal-binding</keyword>
<keyword id="KW-0614">Plasmid</keyword>
<keyword id="KW-1185">Reference proteome</keyword>
<keyword id="KW-0862">Zinc</keyword>
<protein>
    <recommendedName>
        <fullName evidence="1">Succinyl-diaminopimelate desuccinylase 2</fullName>
        <shortName evidence="1">SDAP desuccinylase 2</shortName>
        <ecNumber evidence="1">3.5.1.18</ecNumber>
    </recommendedName>
    <alternativeName>
        <fullName evidence="1">N-succinyl-LL-2,6-diaminoheptanedioate amidohydrolase 2</fullName>
    </alternativeName>
</protein>
<organism>
    <name type="scientific">Ruegeria sp. (strain TM1040)</name>
    <name type="common">Silicibacter sp.</name>
    <dbReference type="NCBI Taxonomy" id="292414"/>
    <lineage>
        <taxon>Bacteria</taxon>
        <taxon>Pseudomonadati</taxon>
        <taxon>Pseudomonadota</taxon>
        <taxon>Alphaproteobacteria</taxon>
        <taxon>Rhodobacterales</taxon>
        <taxon>Roseobacteraceae</taxon>
        <taxon>Ruegeria</taxon>
    </lineage>
</organism>